<gene>
    <name evidence="1" type="primary">accA</name>
    <name type="ordered locus">YpsIP31758_1029</name>
</gene>
<evidence type="ECO:0000255" key="1">
    <source>
        <dbReference type="HAMAP-Rule" id="MF_00823"/>
    </source>
</evidence>
<evidence type="ECO:0000255" key="2">
    <source>
        <dbReference type="PROSITE-ProRule" id="PRU01137"/>
    </source>
</evidence>
<sequence length="319" mass="35496">MSLNFLDFEQPIAELEAKIDSLTAVSRQDEKLDINLDEEVQRLREKSVELTRKIFSDLGAWQIAQLARHPRRPYTLDYIANIFTDFEELAGDRAYADDKAIVGGIARLDGRPVMIIGHQKGRETKEKIRRNFGMPAPEGYRKALRLMEMAERFKLPIITFIDTPGAYPGVGAEERGQSEAIARNLREMSRLNVPIVCTVIGEGGSGGALAIGVGDKVNMLQYSTYSVISPEGCASILWKSADKAPLAAEAMGITAHRLKELKMIDSVIPEPLGGAHRDYAAIAISLKAQLLADLNDLDVLNDEELLNRRYQRLMNYGYC</sequence>
<keyword id="KW-0067">ATP-binding</keyword>
<keyword id="KW-0963">Cytoplasm</keyword>
<keyword id="KW-0275">Fatty acid biosynthesis</keyword>
<keyword id="KW-0276">Fatty acid metabolism</keyword>
<keyword id="KW-0444">Lipid biosynthesis</keyword>
<keyword id="KW-0443">Lipid metabolism</keyword>
<keyword id="KW-0547">Nucleotide-binding</keyword>
<keyword id="KW-0808">Transferase</keyword>
<dbReference type="EC" id="2.1.3.15" evidence="1"/>
<dbReference type="EMBL" id="CP000720">
    <property type="protein sequence ID" value="ABS48971.1"/>
    <property type="molecule type" value="Genomic_DNA"/>
</dbReference>
<dbReference type="RefSeq" id="WP_002212147.1">
    <property type="nucleotide sequence ID" value="NC_009708.1"/>
</dbReference>
<dbReference type="SMR" id="A7FFI5"/>
<dbReference type="GeneID" id="57977501"/>
<dbReference type="KEGG" id="ypi:YpsIP31758_1029"/>
<dbReference type="HOGENOM" id="CLU_015486_0_2_6"/>
<dbReference type="UniPathway" id="UPA00655">
    <property type="reaction ID" value="UER00711"/>
</dbReference>
<dbReference type="Proteomes" id="UP000002412">
    <property type="component" value="Chromosome"/>
</dbReference>
<dbReference type="GO" id="GO:0009317">
    <property type="term" value="C:acetyl-CoA carboxylase complex"/>
    <property type="evidence" value="ECO:0007669"/>
    <property type="project" value="InterPro"/>
</dbReference>
<dbReference type="GO" id="GO:0003989">
    <property type="term" value="F:acetyl-CoA carboxylase activity"/>
    <property type="evidence" value="ECO:0007669"/>
    <property type="project" value="InterPro"/>
</dbReference>
<dbReference type="GO" id="GO:0005524">
    <property type="term" value="F:ATP binding"/>
    <property type="evidence" value="ECO:0007669"/>
    <property type="project" value="UniProtKB-KW"/>
</dbReference>
<dbReference type="GO" id="GO:0016743">
    <property type="term" value="F:carboxyl- or carbamoyltransferase activity"/>
    <property type="evidence" value="ECO:0007669"/>
    <property type="project" value="UniProtKB-UniRule"/>
</dbReference>
<dbReference type="GO" id="GO:0006633">
    <property type="term" value="P:fatty acid biosynthetic process"/>
    <property type="evidence" value="ECO:0007669"/>
    <property type="project" value="UniProtKB-KW"/>
</dbReference>
<dbReference type="GO" id="GO:2001295">
    <property type="term" value="P:malonyl-CoA biosynthetic process"/>
    <property type="evidence" value="ECO:0007669"/>
    <property type="project" value="UniProtKB-UniRule"/>
</dbReference>
<dbReference type="FunFam" id="3.90.226.10:FF:000008">
    <property type="entry name" value="Acetyl-coenzyme A carboxylase carboxyl transferase subunit alpha"/>
    <property type="match status" value="1"/>
</dbReference>
<dbReference type="Gene3D" id="3.90.226.10">
    <property type="entry name" value="2-enoyl-CoA Hydratase, Chain A, domain 1"/>
    <property type="match status" value="1"/>
</dbReference>
<dbReference type="HAMAP" id="MF_00823">
    <property type="entry name" value="AcetylCoA_CT_alpha"/>
    <property type="match status" value="1"/>
</dbReference>
<dbReference type="InterPro" id="IPR001095">
    <property type="entry name" value="Acetyl_CoA_COase_a_su"/>
</dbReference>
<dbReference type="InterPro" id="IPR029045">
    <property type="entry name" value="ClpP/crotonase-like_dom_sf"/>
</dbReference>
<dbReference type="InterPro" id="IPR011763">
    <property type="entry name" value="COA_CT_C"/>
</dbReference>
<dbReference type="NCBIfam" id="TIGR00513">
    <property type="entry name" value="accA"/>
    <property type="match status" value="1"/>
</dbReference>
<dbReference type="NCBIfam" id="NF041504">
    <property type="entry name" value="AccA_sub"/>
    <property type="match status" value="1"/>
</dbReference>
<dbReference type="NCBIfam" id="NF004344">
    <property type="entry name" value="PRK05724.1"/>
    <property type="match status" value="1"/>
</dbReference>
<dbReference type="PANTHER" id="PTHR42853">
    <property type="entry name" value="ACETYL-COENZYME A CARBOXYLASE CARBOXYL TRANSFERASE SUBUNIT ALPHA"/>
    <property type="match status" value="1"/>
</dbReference>
<dbReference type="PANTHER" id="PTHR42853:SF3">
    <property type="entry name" value="ACETYL-COENZYME A CARBOXYLASE CARBOXYL TRANSFERASE SUBUNIT ALPHA, CHLOROPLASTIC"/>
    <property type="match status" value="1"/>
</dbReference>
<dbReference type="Pfam" id="PF03255">
    <property type="entry name" value="ACCA"/>
    <property type="match status" value="1"/>
</dbReference>
<dbReference type="PRINTS" id="PR01069">
    <property type="entry name" value="ACCCTRFRASEA"/>
</dbReference>
<dbReference type="SUPFAM" id="SSF52096">
    <property type="entry name" value="ClpP/crotonase"/>
    <property type="match status" value="1"/>
</dbReference>
<dbReference type="PROSITE" id="PS50989">
    <property type="entry name" value="COA_CT_CTER"/>
    <property type="match status" value="1"/>
</dbReference>
<accession>A7FFI5</accession>
<name>ACCA_YERP3</name>
<reference key="1">
    <citation type="journal article" date="2007" name="PLoS Genet.">
        <title>The complete genome sequence of Yersinia pseudotuberculosis IP31758, the causative agent of Far East scarlet-like fever.</title>
        <authorList>
            <person name="Eppinger M."/>
            <person name="Rosovitz M.J."/>
            <person name="Fricke W.F."/>
            <person name="Rasko D.A."/>
            <person name="Kokorina G."/>
            <person name="Fayolle C."/>
            <person name="Lindler L.E."/>
            <person name="Carniel E."/>
            <person name="Ravel J."/>
        </authorList>
    </citation>
    <scope>NUCLEOTIDE SEQUENCE [LARGE SCALE GENOMIC DNA]</scope>
    <source>
        <strain>IP 31758</strain>
    </source>
</reference>
<comment type="function">
    <text evidence="1">Component of the acetyl coenzyme A carboxylase (ACC) complex. First, biotin carboxylase catalyzes the carboxylation of biotin on its carrier protein (BCCP) and then the CO(2) group is transferred by the carboxyltransferase to acetyl-CoA to form malonyl-CoA.</text>
</comment>
<comment type="catalytic activity">
    <reaction evidence="1">
        <text>N(6)-carboxybiotinyl-L-lysyl-[protein] + acetyl-CoA = N(6)-biotinyl-L-lysyl-[protein] + malonyl-CoA</text>
        <dbReference type="Rhea" id="RHEA:54728"/>
        <dbReference type="Rhea" id="RHEA-COMP:10505"/>
        <dbReference type="Rhea" id="RHEA-COMP:10506"/>
        <dbReference type="ChEBI" id="CHEBI:57288"/>
        <dbReference type="ChEBI" id="CHEBI:57384"/>
        <dbReference type="ChEBI" id="CHEBI:83144"/>
        <dbReference type="ChEBI" id="CHEBI:83145"/>
        <dbReference type="EC" id="2.1.3.15"/>
    </reaction>
</comment>
<comment type="pathway">
    <text evidence="1">Lipid metabolism; malonyl-CoA biosynthesis; malonyl-CoA from acetyl-CoA: step 1/1.</text>
</comment>
<comment type="subunit">
    <text evidence="1">Acetyl-CoA carboxylase is a heterohexamer composed of biotin carboxyl carrier protein (AccB), biotin carboxylase (AccC) and two subunits each of ACCase subunit alpha (AccA) and ACCase subunit beta (AccD).</text>
</comment>
<comment type="subcellular location">
    <subcellularLocation>
        <location evidence="1">Cytoplasm</location>
    </subcellularLocation>
</comment>
<comment type="similarity">
    <text evidence="1">Belongs to the AccA family.</text>
</comment>
<proteinExistence type="inferred from homology"/>
<protein>
    <recommendedName>
        <fullName evidence="1">Acetyl-coenzyme A carboxylase carboxyl transferase subunit alpha</fullName>
        <shortName evidence="1">ACCase subunit alpha</shortName>
        <shortName evidence="1">Acetyl-CoA carboxylase carboxyltransferase subunit alpha</shortName>
        <ecNumber evidence="1">2.1.3.15</ecNumber>
    </recommendedName>
</protein>
<organism>
    <name type="scientific">Yersinia pseudotuberculosis serotype O:1b (strain IP 31758)</name>
    <dbReference type="NCBI Taxonomy" id="349747"/>
    <lineage>
        <taxon>Bacteria</taxon>
        <taxon>Pseudomonadati</taxon>
        <taxon>Pseudomonadota</taxon>
        <taxon>Gammaproteobacteria</taxon>
        <taxon>Enterobacterales</taxon>
        <taxon>Yersiniaceae</taxon>
        <taxon>Yersinia</taxon>
    </lineage>
</organism>
<feature type="chain" id="PRO_1000062700" description="Acetyl-coenzyme A carboxylase carboxyl transferase subunit alpha">
    <location>
        <begin position="1"/>
        <end position="319"/>
    </location>
</feature>
<feature type="domain" description="CoA carboxyltransferase C-terminal" evidence="2">
    <location>
        <begin position="35"/>
        <end position="296"/>
    </location>
</feature>